<feature type="chain" id="PRO_0000110577" description="Bacteriocin UviA">
    <location>
        <begin position="1"/>
        <end position="185"/>
    </location>
</feature>
<sequence>MSELYKNIVLCQNGDKKAIEYIINRFEILINKYKMSFLKEIHFNSYDIEDNKQDLIVSLINIVNKIPIDNPQFENEGCLVNYIYKSILNSRKDMYINKNIKRYFIESQSLSSMVEFKDKPLVKYIESNIEIEDMLKCLTEKEQKVIKYKFLNDKSEVEIAEIMGTSRQWINRIKNTALKKLKENI</sequence>
<proteinExistence type="evidence at transcript level"/>
<protein>
    <recommendedName>
        <fullName>Bacteriocin UviA</fullName>
    </recommendedName>
</protein>
<organism>
    <name type="scientific">Clostridium perfringens</name>
    <dbReference type="NCBI Taxonomy" id="1502"/>
    <lineage>
        <taxon>Bacteria</taxon>
        <taxon>Bacillati</taxon>
        <taxon>Bacillota</taxon>
        <taxon>Clostridia</taxon>
        <taxon>Eubacteriales</taxon>
        <taxon>Clostridiaceae</taxon>
        <taxon>Clostridium</taxon>
    </lineage>
</organism>
<keyword id="KW-0044">Antibiotic</keyword>
<keyword id="KW-0929">Antimicrobial</keyword>
<keyword id="KW-0078">Bacteriocin</keyword>
<keyword id="KW-0614">Plasmid</keyword>
<gene>
    <name type="primary">uviA</name>
</gene>
<dbReference type="EMBL" id="M32882">
    <property type="protein sequence ID" value="AAA98257.1"/>
    <property type="molecule type" value="Genomic_DNA"/>
</dbReference>
<dbReference type="PIR" id="S03777">
    <property type="entry name" value="S03777"/>
</dbReference>
<dbReference type="RefSeq" id="NP_040459.1">
    <property type="nucleotide sequence ID" value="NC_001388.1"/>
</dbReference>
<dbReference type="RefSeq" id="WP_010889931.1">
    <property type="nucleotide sequence ID" value="NC_001388.1"/>
</dbReference>
<dbReference type="SMR" id="P15935"/>
<dbReference type="GO" id="GO:0003700">
    <property type="term" value="F:DNA-binding transcription factor activity"/>
    <property type="evidence" value="ECO:0007669"/>
    <property type="project" value="InterPro"/>
</dbReference>
<dbReference type="GO" id="GO:0042742">
    <property type="term" value="P:defense response to bacterium"/>
    <property type="evidence" value="ECO:0007669"/>
    <property type="project" value="UniProtKB-KW"/>
</dbReference>
<dbReference type="GO" id="GO:0006352">
    <property type="term" value="P:DNA-templated transcription initiation"/>
    <property type="evidence" value="ECO:0007669"/>
    <property type="project" value="InterPro"/>
</dbReference>
<dbReference type="GO" id="GO:0031640">
    <property type="term" value="P:killing of cells of another organism"/>
    <property type="evidence" value="ECO:0007669"/>
    <property type="project" value="UniProtKB-KW"/>
</dbReference>
<dbReference type="CDD" id="cd06171">
    <property type="entry name" value="Sigma70_r4"/>
    <property type="match status" value="1"/>
</dbReference>
<dbReference type="Gene3D" id="1.20.140.160">
    <property type="match status" value="1"/>
</dbReference>
<dbReference type="InterPro" id="IPR024760">
    <property type="entry name" value="HTH_dom_conjug_TS-like"/>
</dbReference>
<dbReference type="InterPro" id="IPR014284">
    <property type="entry name" value="RNA_pol_sigma-70_dom"/>
</dbReference>
<dbReference type="InterPro" id="IPR007630">
    <property type="entry name" value="RNA_pol_sigma70_r4"/>
</dbReference>
<dbReference type="InterPro" id="IPR013325">
    <property type="entry name" value="RNA_pol_sigma_r2"/>
</dbReference>
<dbReference type="InterPro" id="IPR013324">
    <property type="entry name" value="RNA_pol_sigma_r3/r4-like"/>
</dbReference>
<dbReference type="NCBIfam" id="TIGR02937">
    <property type="entry name" value="sigma70-ECF"/>
    <property type="match status" value="1"/>
</dbReference>
<dbReference type="Pfam" id="PF12645">
    <property type="entry name" value="HTH_16"/>
    <property type="match status" value="1"/>
</dbReference>
<dbReference type="Pfam" id="PF04545">
    <property type="entry name" value="Sigma70_r4"/>
    <property type="match status" value="1"/>
</dbReference>
<dbReference type="SUPFAM" id="SSF88946">
    <property type="entry name" value="Sigma2 domain of RNA polymerase sigma factors"/>
    <property type="match status" value="1"/>
</dbReference>
<dbReference type="SUPFAM" id="SSF88659">
    <property type="entry name" value="Sigma3 and sigma4 domains of RNA polymerase sigma factors"/>
    <property type="match status" value="1"/>
</dbReference>
<accession>P15935</accession>
<comment type="function">
    <text>May have a role in bacteriocin secretion or immunity.</text>
</comment>
<comment type="induction">
    <text>By UV irradiation.</text>
</comment>
<name>BCNA_CLOPF</name>
<geneLocation type="plasmid">
    <name>pIP404</name>
</geneLocation>
<reference key="1">
    <citation type="journal article" date="1988" name="Plasmid">
        <title>Complete nucleotide sequence and genetic organization of the bacteriocinogenic plasmid, pIP404, from Clostridium perfringens.</title>
        <authorList>
            <person name="Garnier T."/>
            <person name="Cole S.T."/>
        </authorList>
    </citation>
    <scope>NUCLEOTIDE SEQUENCE [GENOMIC DNA]</scope>
    <source>
        <strain>CPN50</strain>
    </source>
</reference>
<reference key="2">
    <citation type="journal article" date="1988" name="Mol. Microbiol.">
        <title>Studies of UV-inducible promoters from Clostridium perfringens in vivo and in vitro.</title>
        <authorList>
            <person name="Garnier T."/>
            <person name="Cole S.T."/>
        </authorList>
    </citation>
    <scope>NUCLEOTIDE SEQUENCE [GENOMIC DNA]</scope>
    <source>
        <strain>CPN50</strain>
    </source>
</reference>